<evidence type="ECO:0000255" key="1">
    <source>
        <dbReference type="HAMAP-Rule" id="MF_00445"/>
    </source>
</evidence>
<dbReference type="EC" id="7.1.1.-" evidence="1"/>
<dbReference type="EMBL" id="AP010904">
    <property type="protein sequence ID" value="BAH74822.1"/>
    <property type="molecule type" value="Genomic_DNA"/>
</dbReference>
<dbReference type="RefSeq" id="WP_015860032.1">
    <property type="nucleotide sequence ID" value="NC_012796.1"/>
</dbReference>
<dbReference type="SMR" id="C4XMN1"/>
<dbReference type="STRING" id="573370.DMR_13310"/>
<dbReference type="KEGG" id="dma:DMR_13310"/>
<dbReference type="eggNOG" id="COG1007">
    <property type="taxonomic scope" value="Bacteria"/>
</dbReference>
<dbReference type="HOGENOM" id="CLU_007100_1_3_7"/>
<dbReference type="OrthoDB" id="9805769at2"/>
<dbReference type="Proteomes" id="UP000009071">
    <property type="component" value="Chromosome"/>
</dbReference>
<dbReference type="GO" id="GO:0005886">
    <property type="term" value="C:plasma membrane"/>
    <property type="evidence" value="ECO:0007669"/>
    <property type="project" value="UniProtKB-SubCell"/>
</dbReference>
<dbReference type="GO" id="GO:0008137">
    <property type="term" value="F:NADH dehydrogenase (ubiquinone) activity"/>
    <property type="evidence" value="ECO:0007669"/>
    <property type="project" value="InterPro"/>
</dbReference>
<dbReference type="GO" id="GO:0050136">
    <property type="term" value="F:NADH:ubiquinone reductase (non-electrogenic) activity"/>
    <property type="evidence" value="ECO:0007669"/>
    <property type="project" value="UniProtKB-UniRule"/>
</dbReference>
<dbReference type="GO" id="GO:0048038">
    <property type="term" value="F:quinone binding"/>
    <property type="evidence" value="ECO:0007669"/>
    <property type="project" value="UniProtKB-KW"/>
</dbReference>
<dbReference type="GO" id="GO:0042773">
    <property type="term" value="P:ATP synthesis coupled electron transport"/>
    <property type="evidence" value="ECO:0007669"/>
    <property type="project" value="InterPro"/>
</dbReference>
<dbReference type="HAMAP" id="MF_00445">
    <property type="entry name" value="NDH1_NuoN_1"/>
    <property type="match status" value="1"/>
</dbReference>
<dbReference type="InterPro" id="IPR010096">
    <property type="entry name" value="NADH-Q_OxRdtase_suN/2"/>
</dbReference>
<dbReference type="InterPro" id="IPR001750">
    <property type="entry name" value="ND/Mrp_TM"/>
</dbReference>
<dbReference type="NCBIfam" id="TIGR01770">
    <property type="entry name" value="NDH_I_N"/>
    <property type="match status" value="1"/>
</dbReference>
<dbReference type="PANTHER" id="PTHR22773">
    <property type="entry name" value="NADH DEHYDROGENASE"/>
    <property type="match status" value="1"/>
</dbReference>
<dbReference type="Pfam" id="PF00361">
    <property type="entry name" value="Proton_antipo_M"/>
    <property type="match status" value="1"/>
</dbReference>
<keyword id="KW-0997">Cell inner membrane</keyword>
<keyword id="KW-1003">Cell membrane</keyword>
<keyword id="KW-0472">Membrane</keyword>
<keyword id="KW-0520">NAD</keyword>
<keyword id="KW-0874">Quinone</keyword>
<keyword id="KW-1278">Translocase</keyword>
<keyword id="KW-0812">Transmembrane</keyword>
<keyword id="KW-1133">Transmembrane helix</keyword>
<keyword id="KW-0813">Transport</keyword>
<keyword id="KW-0830">Ubiquinone</keyword>
<comment type="function">
    <text evidence="1">NDH-1 shuttles electrons from NADH, via FMN and iron-sulfur (Fe-S) centers, to quinones in the respiratory chain. The immediate electron acceptor for the enzyme in this species is believed to be ubiquinone. Couples the redox reaction to proton translocation (for every two electrons transferred, four hydrogen ions are translocated across the cytoplasmic membrane), and thus conserves the redox energy in a proton gradient.</text>
</comment>
<comment type="catalytic activity">
    <reaction evidence="1">
        <text>a quinone + NADH + 5 H(+)(in) = a quinol + NAD(+) + 4 H(+)(out)</text>
        <dbReference type="Rhea" id="RHEA:57888"/>
        <dbReference type="ChEBI" id="CHEBI:15378"/>
        <dbReference type="ChEBI" id="CHEBI:24646"/>
        <dbReference type="ChEBI" id="CHEBI:57540"/>
        <dbReference type="ChEBI" id="CHEBI:57945"/>
        <dbReference type="ChEBI" id="CHEBI:132124"/>
    </reaction>
</comment>
<comment type="subunit">
    <text evidence="1">NDH-1 is composed of 14 different subunits. Subunits NuoA, H, J, K, L, M, N constitute the membrane sector of the complex.</text>
</comment>
<comment type="subcellular location">
    <subcellularLocation>
        <location evidence="1">Cell inner membrane</location>
        <topology evidence="1">Multi-pass membrane protein</topology>
    </subcellularLocation>
</comment>
<comment type="similarity">
    <text evidence="1">Belongs to the complex I subunit 2 family.</text>
</comment>
<protein>
    <recommendedName>
        <fullName evidence="1">NADH-quinone oxidoreductase subunit N 1</fullName>
        <ecNumber evidence="1">7.1.1.-</ecNumber>
    </recommendedName>
    <alternativeName>
        <fullName evidence="1">NADH dehydrogenase I subunit N 1</fullName>
    </alternativeName>
    <alternativeName>
        <fullName evidence="1">NDH-1 subunit N 1</fullName>
    </alternativeName>
</protein>
<feature type="chain" id="PRO_0000391142" description="NADH-quinone oxidoreductase subunit N 1">
    <location>
        <begin position="1"/>
        <end position="462"/>
    </location>
</feature>
<feature type="transmembrane region" description="Helical" evidence="1">
    <location>
        <begin position="4"/>
        <end position="24"/>
    </location>
</feature>
<feature type="transmembrane region" description="Helical" evidence="1">
    <location>
        <begin position="32"/>
        <end position="52"/>
    </location>
</feature>
<feature type="transmembrane region" description="Helical" evidence="1">
    <location>
        <begin position="60"/>
        <end position="80"/>
    </location>
</feature>
<feature type="transmembrane region" description="Helical" evidence="1">
    <location>
        <begin position="88"/>
        <end position="108"/>
    </location>
</feature>
<feature type="transmembrane region" description="Helical" evidence="1">
    <location>
        <begin position="113"/>
        <end position="133"/>
    </location>
</feature>
<feature type="transmembrane region" description="Helical" evidence="1">
    <location>
        <begin position="148"/>
        <end position="168"/>
    </location>
</feature>
<feature type="transmembrane region" description="Helical" evidence="1">
    <location>
        <begin position="178"/>
        <end position="198"/>
    </location>
</feature>
<feature type="transmembrane region" description="Helical" evidence="1">
    <location>
        <begin position="220"/>
        <end position="240"/>
    </location>
</feature>
<feature type="transmembrane region" description="Helical" evidence="1">
    <location>
        <begin position="251"/>
        <end position="271"/>
    </location>
</feature>
<feature type="transmembrane region" description="Helical" evidence="1">
    <location>
        <begin position="279"/>
        <end position="299"/>
    </location>
</feature>
<feature type="transmembrane region" description="Helical" evidence="1">
    <location>
        <begin position="307"/>
        <end position="327"/>
    </location>
</feature>
<feature type="transmembrane region" description="Helical" evidence="1">
    <location>
        <begin position="351"/>
        <end position="371"/>
    </location>
</feature>
<feature type="transmembrane region" description="Helical" evidence="1">
    <location>
        <begin position="374"/>
        <end position="394"/>
    </location>
</feature>
<feature type="transmembrane region" description="Helical" evidence="1">
    <location>
        <begin position="416"/>
        <end position="436"/>
    </location>
</feature>
<feature type="transmembrane region" description="Helical" evidence="1">
    <location>
        <begin position="439"/>
        <end position="459"/>
    </location>
</feature>
<gene>
    <name evidence="1" type="primary">nuoN1</name>
    <name type="ordered locus">DMR_13310</name>
</gene>
<accession>C4XMN1</accession>
<proteinExistence type="inferred from homology"/>
<reference key="1">
    <citation type="journal article" date="2009" name="Genome Res.">
        <title>Whole genome sequence of Desulfovibrio magneticus strain RS-1 revealed common gene clusters in magnetotactic bacteria.</title>
        <authorList>
            <person name="Nakazawa H."/>
            <person name="Arakaki A."/>
            <person name="Narita-Yamada S."/>
            <person name="Yashiro I."/>
            <person name="Jinno K."/>
            <person name="Aoki N."/>
            <person name="Tsuruyama A."/>
            <person name="Okamura Y."/>
            <person name="Tanikawa S."/>
            <person name="Fujita N."/>
            <person name="Takeyama H."/>
            <person name="Matsunaga T."/>
        </authorList>
    </citation>
    <scope>NUCLEOTIDE SEQUENCE [LARGE SCALE GENOMIC DNA]</scope>
    <source>
        <strain>ATCC 700980 / DSM 13731 / RS-1</strain>
    </source>
</reference>
<sequence>MSAFVVAYFPHLCLAFGGLLVLCLSMARSVPAGFYPATAALFAALPGLWAVAGPQGGSPIACFYAGLLSVIALATIALLARYAERRGFAGDALYGLLLWSALGMLLLADADDWIMLAVGLELASLCLYALIAARLDDNLGTEAALKYFLPGAMALAVLLFGMALIYAASGSMEIAASLAAPGPLTAAGLALVLVGVGFKLSLAPVHLWTPDVYQGAPAPVAAFLSSGSKAAAAAALLHVCSEVSPEARELLWPALAVGAGLTMAVGNLGAVAQASVKRLLAYSSIAQMGYILMAAMAVNDGGGEAALFYLAAFALMDLAAFGAVGALSAQIGDRDDIAAYRGLGYVHPWRAGVLAIGLASLAGLPPTAGFVGKFLVFGAALSAGYVGLAAFGIITAVVGVFYALRLLAALYMRESLIAHPAAVYAAGPAGTLALGVMAAGLVGLGLFPQTLLGAIAALFGGA</sequence>
<name>NUON1_SOLM1</name>
<organism>
    <name type="scientific">Solidesulfovibrio magneticus (strain ATCC 700980 / DSM 13731 / RS-1)</name>
    <name type="common">Desulfovibrio magneticus</name>
    <dbReference type="NCBI Taxonomy" id="573370"/>
    <lineage>
        <taxon>Bacteria</taxon>
        <taxon>Pseudomonadati</taxon>
        <taxon>Thermodesulfobacteriota</taxon>
        <taxon>Desulfovibrionia</taxon>
        <taxon>Desulfovibrionales</taxon>
        <taxon>Desulfovibrionaceae</taxon>
        <taxon>Solidesulfovibrio</taxon>
    </lineage>
</organism>